<proteinExistence type="inferred from homology"/>
<reference key="1">
    <citation type="journal article" date="2007" name="Genome Res.">
        <title>Reductive evolution and niche adaptation inferred from the genome of Mycobacterium ulcerans, the causative agent of Buruli ulcer.</title>
        <authorList>
            <person name="Stinear T.P."/>
            <person name="Seemann T."/>
            <person name="Pidot S."/>
            <person name="Frigui W."/>
            <person name="Reysset G."/>
            <person name="Garnier T."/>
            <person name="Meurice G."/>
            <person name="Simon D."/>
            <person name="Bouchier C."/>
            <person name="Ma L."/>
            <person name="Tichit M."/>
            <person name="Porter J.L."/>
            <person name="Ryan J."/>
            <person name="Johnson P.D.R."/>
            <person name="Davies J.K."/>
            <person name="Jenkin G.A."/>
            <person name="Small P.L.C."/>
            <person name="Jones L.M."/>
            <person name="Tekaia F."/>
            <person name="Laval F."/>
            <person name="Daffe M."/>
            <person name="Parkhill J."/>
            <person name="Cole S.T."/>
        </authorList>
    </citation>
    <scope>NUCLEOTIDE SEQUENCE [LARGE SCALE GENOMIC DNA]</scope>
    <source>
        <strain>Agy99</strain>
    </source>
</reference>
<organism>
    <name type="scientific">Mycobacterium ulcerans (strain Agy99)</name>
    <dbReference type="NCBI Taxonomy" id="362242"/>
    <lineage>
        <taxon>Bacteria</taxon>
        <taxon>Bacillati</taxon>
        <taxon>Actinomycetota</taxon>
        <taxon>Actinomycetes</taxon>
        <taxon>Mycobacteriales</taxon>
        <taxon>Mycobacteriaceae</taxon>
        <taxon>Mycobacterium</taxon>
        <taxon>Mycobacterium ulcerans group</taxon>
    </lineage>
</organism>
<dbReference type="EMBL" id="CP000325">
    <property type="protein sequence ID" value="ABL05876.1"/>
    <property type="molecule type" value="Genomic_DNA"/>
</dbReference>
<dbReference type="RefSeq" id="WP_011741481.1">
    <property type="nucleotide sequence ID" value="NC_008611.1"/>
</dbReference>
<dbReference type="SMR" id="A0PU57"/>
<dbReference type="KEGG" id="mul:MUL_3770"/>
<dbReference type="eggNOG" id="COG1492">
    <property type="taxonomic scope" value="Bacteria"/>
</dbReference>
<dbReference type="HOGENOM" id="CLU_019250_2_2_11"/>
<dbReference type="UniPathway" id="UPA00148"/>
<dbReference type="Proteomes" id="UP000000765">
    <property type="component" value="Chromosome"/>
</dbReference>
<dbReference type="GO" id="GO:0015420">
    <property type="term" value="F:ABC-type vitamin B12 transporter activity"/>
    <property type="evidence" value="ECO:0007669"/>
    <property type="project" value="UniProtKB-UniRule"/>
</dbReference>
<dbReference type="GO" id="GO:0003824">
    <property type="term" value="F:catalytic activity"/>
    <property type="evidence" value="ECO:0007669"/>
    <property type="project" value="InterPro"/>
</dbReference>
<dbReference type="GO" id="GO:0009236">
    <property type="term" value="P:cobalamin biosynthetic process"/>
    <property type="evidence" value="ECO:0007669"/>
    <property type="project" value="UniProtKB-UniRule"/>
</dbReference>
<dbReference type="CDD" id="cd05389">
    <property type="entry name" value="CobQ_N"/>
    <property type="match status" value="1"/>
</dbReference>
<dbReference type="CDD" id="cd01750">
    <property type="entry name" value="GATase1_CobQ"/>
    <property type="match status" value="1"/>
</dbReference>
<dbReference type="Gene3D" id="3.40.50.880">
    <property type="match status" value="1"/>
</dbReference>
<dbReference type="Gene3D" id="3.40.50.300">
    <property type="entry name" value="P-loop containing nucleotide triphosphate hydrolases"/>
    <property type="match status" value="1"/>
</dbReference>
<dbReference type="HAMAP" id="MF_00028">
    <property type="entry name" value="CobQ"/>
    <property type="match status" value="1"/>
</dbReference>
<dbReference type="InterPro" id="IPR029062">
    <property type="entry name" value="Class_I_gatase-like"/>
</dbReference>
<dbReference type="InterPro" id="IPR002586">
    <property type="entry name" value="CobQ/CobB/MinD/ParA_Nub-bd_dom"/>
</dbReference>
<dbReference type="InterPro" id="IPR033949">
    <property type="entry name" value="CobQ_GATase1"/>
</dbReference>
<dbReference type="InterPro" id="IPR047045">
    <property type="entry name" value="CobQ_N"/>
</dbReference>
<dbReference type="InterPro" id="IPR004459">
    <property type="entry name" value="CobQ_synth"/>
</dbReference>
<dbReference type="InterPro" id="IPR011698">
    <property type="entry name" value="GATase_3"/>
</dbReference>
<dbReference type="InterPro" id="IPR027417">
    <property type="entry name" value="P-loop_NTPase"/>
</dbReference>
<dbReference type="NCBIfam" id="TIGR00313">
    <property type="entry name" value="cobQ"/>
    <property type="match status" value="1"/>
</dbReference>
<dbReference type="NCBIfam" id="NF001989">
    <property type="entry name" value="PRK00784.1"/>
    <property type="match status" value="1"/>
</dbReference>
<dbReference type="PANTHER" id="PTHR21343:SF1">
    <property type="entry name" value="COBYRIC ACID SYNTHASE"/>
    <property type="match status" value="1"/>
</dbReference>
<dbReference type="PANTHER" id="PTHR21343">
    <property type="entry name" value="DETHIOBIOTIN SYNTHETASE"/>
    <property type="match status" value="1"/>
</dbReference>
<dbReference type="Pfam" id="PF01656">
    <property type="entry name" value="CbiA"/>
    <property type="match status" value="1"/>
</dbReference>
<dbReference type="Pfam" id="PF07685">
    <property type="entry name" value="GATase_3"/>
    <property type="match status" value="1"/>
</dbReference>
<dbReference type="SUPFAM" id="SSF52317">
    <property type="entry name" value="Class I glutamine amidotransferase-like"/>
    <property type="match status" value="1"/>
</dbReference>
<dbReference type="SUPFAM" id="SSF52540">
    <property type="entry name" value="P-loop containing nucleoside triphosphate hydrolases"/>
    <property type="match status" value="1"/>
</dbReference>
<dbReference type="PROSITE" id="PS51274">
    <property type="entry name" value="GATASE_COBBQ"/>
    <property type="match status" value="1"/>
</dbReference>
<sequence length="491" mass="51663">MPGLLVAGTTSDAGKSTLTAGLCRAFARRGVRVAPFKAQNMSNNSMVCQGPGGAGVEIGRAQWVQALAANATPEAAMNPVLLKPGSDHRSHVVLMGRSWGELASSNWFEGRQVLADTAHRAFDDLAARYDVVVAEGAGSPAEINLRAGDYVNMGLARHAELPTIVVGDIDRGGVFAAFFGTIALLSVEDQALVAGFVVNKFRGDLDLLAPGLRDLERVTGRQVFGTLPWHADLWLDSEDALDLTGRRAASAGAHRVAVVRLPRISNFTDVDALGLEPDLDVVFASDPRGLGDADLIVVPGTRATIADLAWLRARGLDRALMAHVAAGKPLLGICGGFQMLGRVIRDPDGVEGPVAEADGLGLLDVETTFGAEKVLRLPRGQGLGVTASGYEIHHGRITAGDAAQQFLGGARDGQVFGTMWHGSLEGDALREAFLRETLGLTESGTSFSAARERRLDLLGDLVERHLDVDALLALARHGCAPALPFLPPGAP</sequence>
<protein>
    <recommendedName>
        <fullName evidence="1">Cobyric acid synthase</fullName>
    </recommendedName>
</protein>
<comment type="function">
    <text evidence="1">Catalyzes amidations at positions B, D, E, and G on adenosylcobyrinic A,C-diamide. NH(2) groups are provided by glutamine, and one molecule of ATP is hydrogenolyzed for each amidation.</text>
</comment>
<comment type="pathway">
    <text evidence="1">Cofactor biosynthesis; adenosylcobalamin biosynthesis.</text>
</comment>
<comment type="similarity">
    <text evidence="1">Belongs to the CobB/CobQ family. CobQ subfamily.</text>
</comment>
<evidence type="ECO:0000255" key="1">
    <source>
        <dbReference type="HAMAP-Rule" id="MF_00028"/>
    </source>
</evidence>
<name>COBQ_MYCUA</name>
<keyword id="KW-0169">Cobalamin biosynthesis</keyword>
<keyword id="KW-0315">Glutamine amidotransferase</keyword>
<feature type="chain" id="PRO_0000332355" description="Cobyric acid synthase">
    <location>
        <begin position="1"/>
        <end position="491"/>
    </location>
</feature>
<feature type="domain" description="GATase cobBQ-type" evidence="1">
    <location>
        <begin position="253"/>
        <end position="429"/>
    </location>
</feature>
<feature type="active site" description="Nucleophile" evidence="1">
    <location>
        <position position="334"/>
    </location>
</feature>
<feature type="active site" evidence="1">
    <location>
        <position position="421"/>
    </location>
</feature>
<gene>
    <name evidence="1" type="primary">cobQ</name>
    <name type="ordered locus">MUL_3770</name>
</gene>
<accession>A0PU57</accession>